<comment type="function">
    <text>Plasmid partition require REP1, REP2, and a cis-acting DNA sequence (known as STB). REP1 may act by intercalating in the yeast nuclear matrix and binding STB either directly or via REP2.</text>
</comment>
<dbReference type="EMBL" id="X02608">
    <property type="protein sequence ID" value="CAA26454.1"/>
    <property type="molecule type" value="Genomic_DNA"/>
</dbReference>
<dbReference type="PIR" id="S28091">
    <property type="entry name" value="S28091"/>
</dbReference>
<dbReference type="GO" id="GO:0030541">
    <property type="term" value="P:plasmid partitioning"/>
    <property type="evidence" value="ECO:0007669"/>
    <property type="project" value="UniProtKB-KW"/>
</dbReference>
<name>REP1_ZYGBI</name>
<sequence length="322" mass="36317">MPGTAVHFNELELFFRQTRFAELVQYFVEMDDDSDDAEAVFPTSEPSRVSEGSENESGSGEEYEGAPHVHFQESTATEEPRTPSKTPASQTTQSIGRTVSIAEATRRASQESPRQTETAGSSSAPDALSTQQPPLEHSTQQNIPTKLPSTQQAVERVVSSQTTSRAAETRERSPEHTEASTQEAETAEEALNKEEFWNLYRSLESKSYISRENVPDIRLLVMCLKANLEIQGEFDRRRVGLKNRLYIILKDLVEEPWELRAYRGCRSADGLTLSVSFKYKNRPQFSGVKVDLEPKFLQESVVNIYYTISFTVRNVRPLTHSV</sequence>
<feature type="chain" id="PRO_0000150895" description="Trans-acting factor B">
    <location>
        <begin position="1"/>
        <end position="322"/>
    </location>
</feature>
<feature type="region of interest" description="Disordered" evidence="1">
    <location>
        <begin position="35"/>
        <end position="188"/>
    </location>
</feature>
<feature type="compositionally biased region" description="Polar residues" evidence="1">
    <location>
        <begin position="72"/>
        <end position="97"/>
    </location>
</feature>
<feature type="compositionally biased region" description="Polar residues" evidence="1">
    <location>
        <begin position="110"/>
        <end position="166"/>
    </location>
</feature>
<feature type="compositionally biased region" description="Basic and acidic residues" evidence="1">
    <location>
        <begin position="167"/>
        <end position="178"/>
    </location>
</feature>
<accession>P13777</accession>
<keyword id="KW-0614">Plasmid</keyword>
<keyword id="KW-0616">Plasmid partition</keyword>
<protein>
    <recommendedName>
        <fullName>Trans-acting factor B</fullName>
    </recommendedName>
    <alternativeName>
        <fullName>REP1</fullName>
    </alternativeName>
</protein>
<evidence type="ECO:0000256" key="1">
    <source>
        <dbReference type="SAM" id="MobiDB-lite"/>
    </source>
</evidence>
<geneLocation type="plasmid">
    <name>pSB3</name>
</geneLocation>
<gene>
    <name type="primary">B</name>
</gene>
<reference key="1">
    <citation type="journal article" date="1985" name="Nucleic Acids Res.">
        <title>Physical and functional structure of a yeast plasmid, pSB3, isolated from Zygosaccharomyces bisporus.</title>
        <authorList>
            <person name="Toh-e A."/>
            <person name="Utatsu I."/>
        </authorList>
    </citation>
    <scope>NUCLEOTIDE SEQUENCE [GENOMIC DNA]</scope>
</reference>
<organism>
    <name type="scientific">Zygosaccharomyces bisporus</name>
    <dbReference type="NCBI Taxonomy" id="4957"/>
    <lineage>
        <taxon>Eukaryota</taxon>
        <taxon>Fungi</taxon>
        <taxon>Dikarya</taxon>
        <taxon>Ascomycota</taxon>
        <taxon>Saccharomycotina</taxon>
        <taxon>Saccharomycetes</taxon>
        <taxon>Saccharomycetales</taxon>
        <taxon>Saccharomycetaceae</taxon>
        <taxon>Zygosaccharomyces</taxon>
    </lineage>
</organism>
<proteinExistence type="predicted"/>